<dbReference type="EMBL" id="AF354918">
    <property type="protein sequence ID" value="AAQ15160.1"/>
    <property type="molecule type" value="mRNA"/>
</dbReference>
<dbReference type="EMBL" id="AF354919">
    <property type="protein sequence ID" value="AAQ15161.1"/>
    <property type="molecule type" value="mRNA"/>
</dbReference>
<dbReference type="EMBL" id="AF354920">
    <property type="protein sequence ID" value="AAQ15162.1"/>
    <property type="molecule type" value="mRNA"/>
</dbReference>
<dbReference type="EMBL" id="AF354921">
    <property type="protein sequence ID" value="AAQ15163.1"/>
    <property type="molecule type" value="mRNA"/>
</dbReference>
<dbReference type="EMBL" id="AF354922">
    <property type="protein sequence ID" value="AAQ15164.1"/>
    <property type="molecule type" value="mRNA"/>
</dbReference>
<dbReference type="EMBL" id="AF354923">
    <property type="protein sequence ID" value="AAQ15165.1"/>
    <property type="molecule type" value="mRNA"/>
</dbReference>
<dbReference type="SMR" id="Q71RQ7"/>
<dbReference type="GO" id="GO:0005576">
    <property type="term" value="C:extracellular region"/>
    <property type="evidence" value="ECO:0007669"/>
    <property type="project" value="UniProtKB-SubCell"/>
</dbReference>
<dbReference type="GO" id="GO:0090729">
    <property type="term" value="F:toxin activity"/>
    <property type="evidence" value="ECO:0007669"/>
    <property type="project" value="UniProtKB-KW"/>
</dbReference>
<dbReference type="FunFam" id="3.10.100.10:FF:000087">
    <property type="entry name" value="Snaclec rhodocetin subunit delta"/>
    <property type="match status" value="1"/>
</dbReference>
<dbReference type="Gene3D" id="3.10.100.10">
    <property type="entry name" value="Mannose-Binding Protein A, subunit A"/>
    <property type="match status" value="1"/>
</dbReference>
<dbReference type="InterPro" id="IPR001304">
    <property type="entry name" value="C-type_lectin-like"/>
</dbReference>
<dbReference type="InterPro" id="IPR016186">
    <property type="entry name" value="C-type_lectin-like/link_sf"/>
</dbReference>
<dbReference type="InterPro" id="IPR050111">
    <property type="entry name" value="C-type_lectin/snaclec_domain"/>
</dbReference>
<dbReference type="InterPro" id="IPR018378">
    <property type="entry name" value="C-type_lectin_CS"/>
</dbReference>
<dbReference type="InterPro" id="IPR016187">
    <property type="entry name" value="CTDL_fold"/>
</dbReference>
<dbReference type="PANTHER" id="PTHR22803">
    <property type="entry name" value="MANNOSE, PHOSPHOLIPASE, LECTIN RECEPTOR RELATED"/>
    <property type="match status" value="1"/>
</dbReference>
<dbReference type="Pfam" id="PF00059">
    <property type="entry name" value="Lectin_C"/>
    <property type="match status" value="1"/>
</dbReference>
<dbReference type="PRINTS" id="PR01504">
    <property type="entry name" value="PNCREATITSAP"/>
</dbReference>
<dbReference type="SMART" id="SM00034">
    <property type="entry name" value="CLECT"/>
    <property type="match status" value="1"/>
</dbReference>
<dbReference type="SUPFAM" id="SSF56436">
    <property type="entry name" value="C-type lectin-like"/>
    <property type="match status" value="1"/>
</dbReference>
<dbReference type="PROSITE" id="PS00615">
    <property type="entry name" value="C_TYPE_LECTIN_1"/>
    <property type="match status" value="1"/>
</dbReference>
<dbReference type="PROSITE" id="PS50041">
    <property type="entry name" value="C_TYPE_LECTIN_2"/>
    <property type="match status" value="1"/>
</dbReference>
<reference key="1">
    <citation type="submission" date="2001-03" db="EMBL/GenBank/DDBJ databases">
        <title>Cloning and characterization of C-type lectins from Trimeresurus stejnegeri venom.</title>
        <authorList>
            <person name="Lee W.-H."/>
            <person name="Liu H."/>
            <person name="Zhang Y."/>
        </authorList>
    </citation>
    <scope>NUCLEOTIDE SEQUENCE [MRNA]</scope>
    <source>
        <tissue>Venom gland</tissue>
    </source>
</reference>
<keyword id="KW-1015">Disulfide bond</keyword>
<keyword id="KW-1199">Hemostasis impairing toxin</keyword>
<keyword id="KW-0964">Secreted</keyword>
<keyword id="KW-0732">Signal</keyword>
<keyword id="KW-0800">Toxin</keyword>
<evidence type="ECO:0000250" key="1"/>
<evidence type="ECO:0000255" key="2">
    <source>
        <dbReference type="PROSITE-ProRule" id="PRU00040"/>
    </source>
</evidence>
<evidence type="ECO:0000305" key="3"/>
<name>SLBA_TRIST</name>
<proteinExistence type="evidence at transcript level"/>
<comment type="function">
    <text evidence="1">Interferes with one step of hemostasis (modulation of platelet aggregation, or coagulation cascade, for example).</text>
</comment>
<comment type="subunit">
    <text evidence="1">Heteromultimer; disulfide-linked.</text>
</comment>
<comment type="subcellular location">
    <subcellularLocation>
        <location evidence="1">Secreted</location>
    </subcellularLocation>
</comment>
<comment type="tissue specificity">
    <text>Expressed by the venom gland.</text>
</comment>
<comment type="similarity">
    <text evidence="3">Belongs to the snaclec family.</text>
</comment>
<sequence>MGRFISVSFGLLVVFLSLSGTGADCPSDWSSFKQYCYQIIKQLKTWEDAERFCMDQVKGAHLVSIESYREAVFVAQQLSENVKTTKYDVWIGLSVVNKGQQCSSEWSDGSSVSYENLVKPLSKKCFVLKKGTEFRKWFNVACEQKHLFMCKFLRPR</sequence>
<organism>
    <name type="scientific">Trimeresurus stejnegeri</name>
    <name type="common">Chinese green tree viper</name>
    <name type="synonym">Viridovipera stejnegeri</name>
    <dbReference type="NCBI Taxonomy" id="39682"/>
    <lineage>
        <taxon>Eukaryota</taxon>
        <taxon>Metazoa</taxon>
        <taxon>Chordata</taxon>
        <taxon>Craniata</taxon>
        <taxon>Vertebrata</taxon>
        <taxon>Euteleostomi</taxon>
        <taxon>Lepidosauria</taxon>
        <taxon>Squamata</taxon>
        <taxon>Bifurcata</taxon>
        <taxon>Unidentata</taxon>
        <taxon>Episquamata</taxon>
        <taxon>Toxicofera</taxon>
        <taxon>Serpentes</taxon>
        <taxon>Colubroidea</taxon>
        <taxon>Viperidae</taxon>
        <taxon>Crotalinae</taxon>
        <taxon>Trimeresurus</taxon>
    </lineage>
</organism>
<accession>Q71RQ7</accession>
<accession>Q71RQ2</accession>
<accession>Q71RQ4</accession>
<accession>Q71RQ6</accession>
<protein>
    <recommendedName>
        <fullName>Snaclec stejaggregin-B subunit alpha</fullName>
    </recommendedName>
</protein>
<feature type="signal peptide" evidence="1">
    <location>
        <begin position="1"/>
        <end position="23"/>
    </location>
</feature>
<feature type="chain" id="PRO_0000355305" description="Snaclec stejaggregin-B subunit alpha">
    <location>
        <begin position="24"/>
        <end position="156"/>
    </location>
</feature>
<feature type="domain" description="C-type lectin" evidence="2">
    <location>
        <begin position="32"/>
        <end position="151"/>
    </location>
</feature>
<feature type="disulfide bond" evidence="2">
    <location>
        <begin position="25"/>
        <end position="36"/>
    </location>
</feature>
<feature type="disulfide bond" evidence="2">
    <location>
        <begin position="53"/>
        <end position="150"/>
    </location>
</feature>
<feature type="disulfide bond" description="Interchain (with C-98 in beta chain)" evidence="2">
    <location>
        <position position="102"/>
    </location>
</feature>
<feature type="disulfide bond" evidence="2">
    <location>
        <begin position="125"/>
        <end position="142"/>
    </location>
</feature>
<feature type="sequence variant" description="In subunit alpha-2 and subunit alpha-3.">
    <original>S</original>
    <variation>F</variation>
    <location>
        <position position="6"/>
    </location>
</feature>
<feature type="sequence variant" description="In subunit alpha-3.">
    <original>I</original>
    <variation>T</variation>
    <location>
        <position position="91"/>
    </location>
</feature>
<feature type="sequence variant" description="In subunit alpha-4.">
    <original>R</original>
    <variation>G</variation>
    <location>
        <position position="154"/>
    </location>
</feature>